<reference key="1">
    <citation type="journal article" date="1991" name="FEBS Lett.">
        <title>Two antifungal thaumatin-like proteins from barley grain.</title>
        <authorList>
            <person name="Hejgaard J."/>
            <person name="Jacobsen S."/>
            <person name="Svendsen I."/>
        </authorList>
    </citation>
    <scope>PROTEIN SEQUENCE</scope>
    <source>
        <strain>cv. Bomi Riso 1508</strain>
    </source>
</reference>
<comment type="function">
    <text>Has antifungal activity. Inhibits the growth of Trichoderma viridae and Candida albicans.</text>
</comment>
<comment type="similarity">
    <text evidence="1">Belongs to the thaumatin family.</text>
</comment>
<name>THHS_HORVU</name>
<keyword id="KW-0929">Antimicrobial</keyword>
<keyword id="KW-0903">Direct protein sequencing</keyword>
<keyword id="KW-0295">Fungicide</keyword>
<keyword id="KW-0611">Plant defense</keyword>
<sequence length="37" mass="3874">ATFTVINKCQYTVWAAAVPAGGGQKLDAGQTWSIXXP</sequence>
<feature type="chain" id="PRO_0000096231" description="Antifungal protein S">
    <location>
        <begin position="1"/>
        <end position="37" status="greater than"/>
    </location>
</feature>
<feature type="non-terminal residue">
    <location>
        <position position="37"/>
    </location>
</feature>
<proteinExistence type="evidence at protein level"/>
<organism>
    <name type="scientific">Hordeum vulgare</name>
    <name type="common">Barley</name>
    <dbReference type="NCBI Taxonomy" id="4513"/>
    <lineage>
        <taxon>Eukaryota</taxon>
        <taxon>Viridiplantae</taxon>
        <taxon>Streptophyta</taxon>
        <taxon>Embryophyta</taxon>
        <taxon>Tracheophyta</taxon>
        <taxon>Spermatophyta</taxon>
        <taxon>Magnoliopsida</taxon>
        <taxon>Liliopsida</taxon>
        <taxon>Poales</taxon>
        <taxon>Poaceae</taxon>
        <taxon>BOP clade</taxon>
        <taxon>Pooideae</taxon>
        <taxon>Triticodae</taxon>
        <taxon>Triticeae</taxon>
        <taxon>Hordeinae</taxon>
        <taxon>Hordeum</taxon>
    </lineage>
</organism>
<evidence type="ECO:0000255" key="1">
    <source>
        <dbReference type="PROSITE-ProRule" id="PRU00699"/>
    </source>
</evidence>
<protein>
    <recommendedName>
        <fullName>Antifungal protein S</fullName>
    </recommendedName>
</protein>
<accession>P33045</accession>
<dbReference type="PIR" id="S17684">
    <property type="entry name" value="S17684"/>
</dbReference>
<dbReference type="GO" id="GO:0050832">
    <property type="term" value="P:defense response to fungus"/>
    <property type="evidence" value="ECO:0007669"/>
    <property type="project" value="UniProtKB-KW"/>
</dbReference>
<dbReference type="GO" id="GO:0031640">
    <property type="term" value="P:killing of cells of another organism"/>
    <property type="evidence" value="ECO:0007669"/>
    <property type="project" value="UniProtKB-KW"/>
</dbReference>
<dbReference type="Gene3D" id="2.60.110.10">
    <property type="entry name" value="Thaumatin"/>
    <property type="match status" value="1"/>
</dbReference>
<dbReference type="InterPro" id="IPR037176">
    <property type="entry name" value="Osmotin/thaumatin-like_sf"/>
</dbReference>
<dbReference type="InterPro" id="IPR001938">
    <property type="entry name" value="Thaumatin"/>
</dbReference>
<dbReference type="PRINTS" id="PR00347">
    <property type="entry name" value="THAUMATIN"/>
</dbReference>
<dbReference type="SUPFAM" id="SSF49870">
    <property type="entry name" value="Osmotin, thaumatin-like protein"/>
    <property type="match status" value="1"/>
</dbReference>
<dbReference type="PROSITE" id="PS51367">
    <property type="entry name" value="THAUMATIN_2"/>
    <property type="match status" value="1"/>
</dbReference>